<comment type="function">
    <text evidence="1">Specifically catalyzes the cleavage of the D-lactyl ether substituent of MurNAc 6-phosphate, producing GlcNAc 6-phosphate and D-lactate. Together with AnmK, is also required for the utilization of anhydro-N-acetylmuramic acid (anhMurNAc) either imported from the medium or derived from its own cell wall murein, and thus plays a role in cell wall recycling.</text>
</comment>
<comment type="catalytic activity">
    <reaction evidence="1">
        <text>N-acetyl-D-muramate 6-phosphate + H2O = N-acetyl-D-glucosamine 6-phosphate + (R)-lactate</text>
        <dbReference type="Rhea" id="RHEA:26410"/>
        <dbReference type="ChEBI" id="CHEBI:15377"/>
        <dbReference type="ChEBI" id="CHEBI:16004"/>
        <dbReference type="ChEBI" id="CHEBI:57513"/>
        <dbReference type="ChEBI" id="CHEBI:58722"/>
        <dbReference type="EC" id="4.2.1.126"/>
    </reaction>
</comment>
<comment type="pathway">
    <text evidence="1">Amino-sugar metabolism; 1,6-anhydro-N-acetylmuramate degradation.</text>
</comment>
<comment type="pathway">
    <text evidence="1">Amino-sugar metabolism; N-acetylmuramate degradation.</text>
</comment>
<comment type="pathway">
    <text evidence="1">Cell wall biogenesis; peptidoglycan recycling.</text>
</comment>
<comment type="subunit">
    <text evidence="1">Homodimer.</text>
</comment>
<comment type="induction">
    <text evidence="1">Induced by MurNAc 6-phosphate that releases the repressor MurR from the DNA. Repressed by MurR in the absence of MurNAc 6-phosphate.</text>
</comment>
<comment type="miscellaneous">
    <text evidence="1">A lyase-type mechanism (elimination/hydration) is suggested for the cleavage of the lactyl ether bond of MurNAc 6-phosphate, with the formation of an alpha,beta-unsaturated aldehyde intermediate with (E)-stereochemistry, followed by the syn addition of water to give product.</text>
</comment>
<comment type="similarity">
    <text evidence="1">Belongs to the GCKR-like family. MurNAc-6-P etherase subfamily.</text>
</comment>
<evidence type="ECO:0000255" key="1">
    <source>
        <dbReference type="HAMAP-Rule" id="MF_00068"/>
    </source>
</evidence>
<reference key="1">
    <citation type="journal article" date="2008" name="Genome Res.">
        <title>Comparative genome analysis of Salmonella enteritidis PT4 and Salmonella gallinarum 287/91 provides insights into evolutionary and host adaptation pathways.</title>
        <authorList>
            <person name="Thomson N.R."/>
            <person name="Clayton D.J."/>
            <person name="Windhorst D."/>
            <person name="Vernikos G."/>
            <person name="Davidson S."/>
            <person name="Churcher C."/>
            <person name="Quail M.A."/>
            <person name="Stevens M."/>
            <person name="Jones M.A."/>
            <person name="Watson M."/>
            <person name="Barron A."/>
            <person name="Layton A."/>
            <person name="Pickard D."/>
            <person name="Kingsley R.A."/>
            <person name="Bignell A."/>
            <person name="Clark L."/>
            <person name="Harris B."/>
            <person name="Ormond D."/>
            <person name="Abdellah Z."/>
            <person name="Brooks K."/>
            <person name="Cherevach I."/>
            <person name="Chillingworth T."/>
            <person name="Woodward J."/>
            <person name="Norberczak H."/>
            <person name="Lord A."/>
            <person name="Arrowsmith C."/>
            <person name="Jagels K."/>
            <person name="Moule S."/>
            <person name="Mungall K."/>
            <person name="Saunders M."/>
            <person name="Whitehead S."/>
            <person name="Chabalgoity J.A."/>
            <person name="Maskell D."/>
            <person name="Humphreys T."/>
            <person name="Roberts M."/>
            <person name="Barrow P.A."/>
            <person name="Dougan G."/>
            <person name="Parkhill J."/>
        </authorList>
    </citation>
    <scope>NUCLEOTIDE SEQUENCE [LARGE SCALE GENOMIC DNA]</scope>
    <source>
        <strain>P125109</strain>
    </source>
</reference>
<name>MURQ_SALEP</name>
<dbReference type="EC" id="4.2.1.126" evidence="1"/>
<dbReference type="EMBL" id="AM933172">
    <property type="protein sequence ID" value="CAR34133.1"/>
    <property type="molecule type" value="Genomic_DNA"/>
</dbReference>
<dbReference type="RefSeq" id="WP_001048537.1">
    <property type="nucleotide sequence ID" value="NC_011294.1"/>
</dbReference>
<dbReference type="SMR" id="B5QTT8"/>
<dbReference type="KEGG" id="set:SEN2551"/>
<dbReference type="HOGENOM" id="CLU_049049_1_1_6"/>
<dbReference type="UniPathway" id="UPA00342"/>
<dbReference type="UniPathway" id="UPA00343"/>
<dbReference type="UniPathway" id="UPA00544"/>
<dbReference type="Proteomes" id="UP000000613">
    <property type="component" value="Chromosome"/>
</dbReference>
<dbReference type="GO" id="GO:0097367">
    <property type="term" value="F:carbohydrate derivative binding"/>
    <property type="evidence" value="ECO:0007669"/>
    <property type="project" value="InterPro"/>
</dbReference>
<dbReference type="GO" id="GO:0016835">
    <property type="term" value="F:carbon-oxygen lyase activity"/>
    <property type="evidence" value="ECO:0007669"/>
    <property type="project" value="UniProtKB-UniRule"/>
</dbReference>
<dbReference type="GO" id="GO:0016803">
    <property type="term" value="F:ether hydrolase activity"/>
    <property type="evidence" value="ECO:0007669"/>
    <property type="project" value="TreeGrafter"/>
</dbReference>
<dbReference type="GO" id="GO:0097175">
    <property type="term" value="P:1,6-anhydro-N-acetyl-beta-muramic acid catabolic process"/>
    <property type="evidence" value="ECO:0007669"/>
    <property type="project" value="UniProtKB-UniRule"/>
</dbReference>
<dbReference type="GO" id="GO:0046348">
    <property type="term" value="P:amino sugar catabolic process"/>
    <property type="evidence" value="ECO:0007669"/>
    <property type="project" value="InterPro"/>
</dbReference>
<dbReference type="GO" id="GO:0097173">
    <property type="term" value="P:N-acetylmuramic acid catabolic process"/>
    <property type="evidence" value="ECO:0007669"/>
    <property type="project" value="UniProtKB-UniPathway"/>
</dbReference>
<dbReference type="GO" id="GO:0009254">
    <property type="term" value="P:peptidoglycan turnover"/>
    <property type="evidence" value="ECO:0007669"/>
    <property type="project" value="UniProtKB-UniRule"/>
</dbReference>
<dbReference type="CDD" id="cd05007">
    <property type="entry name" value="SIS_Etherase"/>
    <property type="match status" value="1"/>
</dbReference>
<dbReference type="FunFam" id="1.10.8.1080:FF:000001">
    <property type="entry name" value="N-acetylmuramic acid 6-phosphate etherase"/>
    <property type="match status" value="1"/>
</dbReference>
<dbReference type="FunFam" id="3.40.50.10490:FF:000014">
    <property type="entry name" value="N-acetylmuramic acid 6-phosphate etherase"/>
    <property type="match status" value="1"/>
</dbReference>
<dbReference type="Gene3D" id="1.10.8.1080">
    <property type="match status" value="1"/>
</dbReference>
<dbReference type="Gene3D" id="3.40.50.10490">
    <property type="entry name" value="Glucose-6-phosphate isomerase like protein, domain 1"/>
    <property type="match status" value="1"/>
</dbReference>
<dbReference type="HAMAP" id="MF_00068">
    <property type="entry name" value="MurQ"/>
    <property type="match status" value="1"/>
</dbReference>
<dbReference type="InterPro" id="IPR005488">
    <property type="entry name" value="Etherase_MurQ"/>
</dbReference>
<dbReference type="InterPro" id="IPR005486">
    <property type="entry name" value="Glucokinase_regulatory_CS"/>
</dbReference>
<dbReference type="InterPro" id="IPR040190">
    <property type="entry name" value="MURQ/GCKR"/>
</dbReference>
<dbReference type="InterPro" id="IPR001347">
    <property type="entry name" value="SIS_dom"/>
</dbReference>
<dbReference type="InterPro" id="IPR046348">
    <property type="entry name" value="SIS_dom_sf"/>
</dbReference>
<dbReference type="NCBIfam" id="TIGR00274">
    <property type="entry name" value="N-acetylmuramic acid 6-phosphate etherase"/>
    <property type="match status" value="1"/>
</dbReference>
<dbReference type="NCBIfam" id="NF003915">
    <property type="entry name" value="PRK05441.1"/>
    <property type="match status" value="1"/>
</dbReference>
<dbReference type="NCBIfam" id="NF009222">
    <property type="entry name" value="PRK12570.1"/>
    <property type="match status" value="1"/>
</dbReference>
<dbReference type="PANTHER" id="PTHR10088">
    <property type="entry name" value="GLUCOKINASE REGULATORY PROTEIN"/>
    <property type="match status" value="1"/>
</dbReference>
<dbReference type="PANTHER" id="PTHR10088:SF5">
    <property type="entry name" value="N-ACETYLMURAMIC ACID 6-PHOSPHATE ETHERASE"/>
    <property type="match status" value="1"/>
</dbReference>
<dbReference type="Pfam" id="PF22645">
    <property type="entry name" value="GKRP_SIS_N"/>
    <property type="match status" value="1"/>
</dbReference>
<dbReference type="SUPFAM" id="SSF53697">
    <property type="entry name" value="SIS domain"/>
    <property type="match status" value="1"/>
</dbReference>
<dbReference type="PROSITE" id="PS01272">
    <property type="entry name" value="GCKR"/>
    <property type="match status" value="1"/>
</dbReference>
<dbReference type="PROSITE" id="PS51464">
    <property type="entry name" value="SIS"/>
    <property type="match status" value="1"/>
</dbReference>
<organism>
    <name type="scientific">Salmonella enteritidis PT4 (strain P125109)</name>
    <dbReference type="NCBI Taxonomy" id="550537"/>
    <lineage>
        <taxon>Bacteria</taxon>
        <taxon>Pseudomonadati</taxon>
        <taxon>Pseudomonadota</taxon>
        <taxon>Gammaproteobacteria</taxon>
        <taxon>Enterobacterales</taxon>
        <taxon>Enterobacteriaceae</taxon>
        <taxon>Salmonella</taxon>
    </lineage>
</organism>
<gene>
    <name evidence="1" type="primary">murQ</name>
    <name type="ordered locus">SEN2551</name>
</gene>
<sequence length="297" mass="30976">MNLGTLVSETRNPQTMDLDALPTPELVKRFNEQDTRVAEAVKATLPDVARAVDAAVAALKSGGRIIYMGAGTSGRLGVLDASECPPTFGVPHGLVVGLIAGGPGALLKAVEGAEDSQQAGEDDLVALNLQEQDLVVGLAASGRTPYVIGGLRYARQSGCTTVAVSCNPDSPIAREANIAISPVVGPEALTGSTRLKSGTAQKMVLNMISTGAMVKFGKVYQNLMVDMKATNVKLVDRACRMVVEATGIGREEAETLLKQTDFEVKPAILMALTGLDAAAAREKLAAHQGFLRAALEH</sequence>
<proteinExistence type="inferred from homology"/>
<accession>B5QTT8</accession>
<feature type="chain" id="PRO_1000092313" description="N-acetylmuramic acid 6-phosphate etherase">
    <location>
        <begin position="1"/>
        <end position="297"/>
    </location>
</feature>
<feature type="domain" description="SIS" evidence="1">
    <location>
        <begin position="55"/>
        <end position="218"/>
    </location>
</feature>
<feature type="active site" description="Proton donor" evidence="1">
    <location>
        <position position="83"/>
    </location>
</feature>
<feature type="active site" evidence="1">
    <location>
        <position position="114"/>
    </location>
</feature>
<keyword id="KW-0119">Carbohydrate metabolism</keyword>
<keyword id="KW-0456">Lyase</keyword>
<protein>
    <recommendedName>
        <fullName evidence="1">N-acetylmuramic acid 6-phosphate etherase</fullName>
        <shortName evidence="1">MurNAc-6-P etherase</shortName>
        <ecNumber evidence="1">4.2.1.126</ecNumber>
    </recommendedName>
    <alternativeName>
        <fullName evidence="1">N-acetylmuramic acid 6-phosphate hydrolase</fullName>
    </alternativeName>
    <alternativeName>
        <fullName evidence="1">N-acetylmuramic acid 6-phosphate lyase</fullName>
    </alternativeName>
</protein>